<feature type="signal peptide" evidence="1">
    <location>
        <begin position="1"/>
        <end position="37"/>
    </location>
</feature>
<feature type="chain" id="PRO_0000314451" description="Secretion monitor">
    <location>
        <begin position="38"/>
        <end position="170"/>
    </location>
</feature>
<organism>
    <name type="scientific">Shigella sonnei (strain Ss046)</name>
    <dbReference type="NCBI Taxonomy" id="300269"/>
    <lineage>
        <taxon>Bacteria</taxon>
        <taxon>Pseudomonadati</taxon>
        <taxon>Pseudomonadota</taxon>
        <taxon>Gammaproteobacteria</taxon>
        <taxon>Enterobacterales</taxon>
        <taxon>Enterobacteriaceae</taxon>
        <taxon>Shigella</taxon>
    </lineage>
</organism>
<protein>
    <recommendedName>
        <fullName evidence="1">Secretion monitor</fullName>
    </recommendedName>
</protein>
<comment type="function">
    <text evidence="1">Regulates secA expression by translational coupling of the secM secA operon. Translational pausing at a specific Pro residue 5 residues before the end of the protein may allow disruption of a mRNA repressor helix that normally suppresses secA translation initiation.</text>
</comment>
<comment type="subcellular location">
    <subcellularLocation>
        <location evidence="1">Cytoplasm</location>
        <location evidence="1">Cytosol</location>
    </subcellularLocation>
    <subcellularLocation>
        <location evidence="1">Periplasm</location>
    </subcellularLocation>
    <text evidence="1">The active form is cytosolic, while the periplasmic form is rapidly degraded, mainly by the tail-specific protease.</text>
</comment>
<comment type="similarity">
    <text evidence="1">Belongs to the SecM family.</text>
</comment>
<comment type="sequence caution" evidence="2">
    <conflict type="erroneous initiation">
        <sequence resource="EMBL-CDS" id="AAZ86900"/>
    </conflict>
</comment>
<reference key="1">
    <citation type="journal article" date="2005" name="Nucleic Acids Res.">
        <title>Genome dynamics and diversity of Shigella species, the etiologic agents of bacillary dysentery.</title>
        <authorList>
            <person name="Yang F."/>
            <person name="Yang J."/>
            <person name="Zhang X."/>
            <person name="Chen L."/>
            <person name="Jiang Y."/>
            <person name="Yan Y."/>
            <person name="Tang X."/>
            <person name="Wang J."/>
            <person name="Xiong Z."/>
            <person name="Dong J."/>
            <person name="Xue Y."/>
            <person name="Zhu Y."/>
            <person name="Xu X."/>
            <person name="Sun L."/>
            <person name="Chen S."/>
            <person name="Nie H."/>
            <person name="Peng J."/>
            <person name="Xu J."/>
            <person name="Wang Y."/>
            <person name="Yuan Z."/>
            <person name="Wen Y."/>
            <person name="Yao Z."/>
            <person name="Shen Y."/>
            <person name="Qiang B."/>
            <person name="Hou Y."/>
            <person name="Yu J."/>
            <person name="Jin Q."/>
        </authorList>
    </citation>
    <scope>NUCLEOTIDE SEQUENCE [LARGE SCALE GENOMIC DNA]</scope>
    <source>
        <strain>Ss046</strain>
    </source>
</reference>
<accession>Q3Z5R2</accession>
<sequence>MSGILTRWRQFGKRYFWPHLLLGMVAASLGLPALSNAAEPNAPAKATTRNHEPSAKVNFGQLALLEANTRRPNSNYSVDYWHQHAIRTVIRHLSFAMAPQTLPVAEESLPLQAQHLALLDTLSALLTQEGTPSEKGYRIDYAHFTPQAKFSTPVWISQAQGIRAGPQRLT</sequence>
<proteinExistence type="inferred from homology"/>
<name>SECM_SHISS</name>
<gene>
    <name evidence="1" type="primary">secM</name>
    <name type="ordered locus">SSON_0105</name>
</gene>
<keyword id="KW-0963">Cytoplasm</keyword>
<keyword id="KW-0574">Periplasm</keyword>
<keyword id="KW-1185">Reference proteome</keyword>
<keyword id="KW-0732">Signal</keyword>
<dbReference type="EMBL" id="CP000038">
    <property type="protein sequence ID" value="AAZ86900.1"/>
    <property type="status" value="ALT_INIT"/>
    <property type="molecule type" value="Genomic_DNA"/>
</dbReference>
<dbReference type="RefSeq" id="WP_000014321.1">
    <property type="nucleotide sequence ID" value="NC_007384.1"/>
</dbReference>
<dbReference type="SMR" id="Q3Z5R2"/>
<dbReference type="GeneID" id="93777337"/>
<dbReference type="KEGG" id="ssn:SSON_0105"/>
<dbReference type="HOGENOM" id="CLU_108853_0_0_6"/>
<dbReference type="Proteomes" id="UP000002529">
    <property type="component" value="Chromosome"/>
</dbReference>
<dbReference type="GO" id="GO:0005829">
    <property type="term" value="C:cytosol"/>
    <property type="evidence" value="ECO:0007669"/>
    <property type="project" value="UniProtKB-SubCell"/>
</dbReference>
<dbReference type="GO" id="GO:0042597">
    <property type="term" value="C:periplasmic space"/>
    <property type="evidence" value="ECO:0007669"/>
    <property type="project" value="UniProtKB-SubCell"/>
</dbReference>
<dbReference type="GO" id="GO:0045182">
    <property type="term" value="F:translation regulator activity"/>
    <property type="evidence" value="ECO:0007669"/>
    <property type="project" value="InterPro"/>
</dbReference>
<dbReference type="HAMAP" id="MF_01332">
    <property type="entry name" value="SecM"/>
    <property type="match status" value="1"/>
</dbReference>
<dbReference type="InterPro" id="IPR009502">
    <property type="entry name" value="SecM"/>
</dbReference>
<dbReference type="NCBIfam" id="NF002799">
    <property type="entry name" value="PRK02943.1-1"/>
    <property type="match status" value="1"/>
</dbReference>
<dbReference type="Pfam" id="PF06558">
    <property type="entry name" value="SecM"/>
    <property type="match status" value="1"/>
</dbReference>
<dbReference type="PIRSF" id="PIRSF004572">
    <property type="entry name" value="SecM"/>
    <property type="match status" value="1"/>
</dbReference>
<evidence type="ECO:0000255" key="1">
    <source>
        <dbReference type="HAMAP-Rule" id="MF_01332"/>
    </source>
</evidence>
<evidence type="ECO:0000305" key="2"/>